<feature type="signal peptide" evidence="3">
    <location>
        <begin position="1"/>
        <end position="23"/>
    </location>
</feature>
<feature type="chain" id="PRO_0000384135" description="Glycosylasparaginase alpha chain" evidence="2">
    <location>
        <begin position="24"/>
        <end position="242"/>
    </location>
</feature>
<feature type="chain" id="PRO_0000384136" description="Glycosylasparaginase beta chain" evidence="2">
    <location>
        <begin position="243"/>
        <end position="393"/>
    </location>
</feature>
<feature type="active site" description="Nucleophile" evidence="2">
    <location>
        <position position="243"/>
    </location>
</feature>
<feature type="binding site" evidence="1">
    <location>
        <begin position="271"/>
        <end position="274"/>
    </location>
    <ligand>
        <name>substrate</name>
    </ligand>
</feature>
<feature type="binding site" evidence="1">
    <location>
        <begin position="294"/>
        <end position="297"/>
    </location>
    <ligand>
        <name>substrate</name>
    </ligand>
</feature>
<feature type="disulfide bond" evidence="2">
    <location>
        <begin position="97"/>
        <end position="102"/>
    </location>
</feature>
<feature type="disulfide bond" evidence="2">
    <location>
        <begin position="196"/>
        <end position="212"/>
    </location>
</feature>
<feature type="disulfide bond" evidence="2">
    <location>
        <begin position="354"/>
        <end position="381"/>
    </location>
</feature>
<reference evidence="4" key="1">
    <citation type="journal article" date="2007" name="Nature">
        <title>Evolution of genes and genomes on the Drosophila phylogeny.</title>
        <authorList>
            <consortium name="Drosophila 12 genomes consortium"/>
        </authorList>
    </citation>
    <scope>NUCLEOTIDE SEQUENCE [LARGE SCALE GENOMIC DNA]</scope>
    <source>
        <strain evidence="4">Rob3c / Tucson 14021-0248.25</strain>
    </source>
</reference>
<name>ASPG1_DROSE</name>
<dbReference type="EC" id="3.5.1.26"/>
<dbReference type="EMBL" id="CH480816">
    <property type="protein sequence ID" value="EDW47125.1"/>
    <property type="molecule type" value="Genomic_DNA"/>
</dbReference>
<dbReference type="SMR" id="B4HT15"/>
<dbReference type="STRING" id="7238.B4HT15"/>
<dbReference type="EnsemblMetazoa" id="FBtr0204122">
    <property type="protein sequence ID" value="FBpp0202614"/>
    <property type="gene ID" value="FBgn0176018"/>
</dbReference>
<dbReference type="EnsemblMetazoa" id="XM_002033076.2">
    <property type="protein sequence ID" value="XP_002033112.1"/>
    <property type="gene ID" value="LOC6608376"/>
</dbReference>
<dbReference type="GeneID" id="6608376"/>
<dbReference type="KEGG" id="dse:6608376"/>
<dbReference type="HOGENOM" id="CLU_021603_0_0_1"/>
<dbReference type="OMA" id="YKPIINI"/>
<dbReference type="OrthoDB" id="6769at7215"/>
<dbReference type="PhylomeDB" id="B4HT15"/>
<dbReference type="Proteomes" id="UP000001292">
    <property type="component" value="Unassembled WGS sequence"/>
</dbReference>
<dbReference type="GO" id="GO:0005764">
    <property type="term" value="C:lysosome"/>
    <property type="evidence" value="ECO:0000250"/>
    <property type="project" value="UniProtKB"/>
</dbReference>
<dbReference type="GO" id="GO:0003948">
    <property type="term" value="F:N4-(beta-N-acetylglucosaminyl)-L-asparaginase activity"/>
    <property type="evidence" value="ECO:0000250"/>
    <property type="project" value="UniProtKB"/>
</dbReference>
<dbReference type="GO" id="GO:0008233">
    <property type="term" value="F:peptidase activity"/>
    <property type="evidence" value="ECO:0007669"/>
    <property type="project" value="UniProtKB-KW"/>
</dbReference>
<dbReference type="GO" id="GO:0006517">
    <property type="term" value="P:protein deglycosylation"/>
    <property type="evidence" value="ECO:0000250"/>
    <property type="project" value="UniProtKB"/>
</dbReference>
<dbReference type="GO" id="GO:0006508">
    <property type="term" value="P:proteolysis"/>
    <property type="evidence" value="ECO:0007669"/>
    <property type="project" value="UniProtKB-KW"/>
</dbReference>
<dbReference type="CDD" id="cd04513">
    <property type="entry name" value="Glycosylasparaginase"/>
    <property type="match status" value="1"/>
</dbReference>
<dbReference type="FunFam" id="3.60.20.30:FF:000003">
    <property type="entry name" value="N(4)-(Beta-N-acetylglucosaminyl)-L-asparaginase isoform X1"/>
    <property type="match status" value="1"/>
</dbReference>
<dbReference type="Gene3D" id="3.60.20.30">
    <property type="entry name" value="(Glycosyl)asparaginase"/>
    <property type="match status" value="1"/>
</dbReference>
<dbReference type="InterPro" id="IPR029055">
    <property type="entry name" value="Ntn_hydrolases_N"/>
</dbReference>
<dbReference type="InterPro" id="IPR000246">
    <property type="entry name" value="Peptidase_T2"/>
</dbReference>
<dbReference type="PANTHER" id="PTHR10188">
    <property type="entry name" value="L-ASPARAGINASE"/>
    <property type="match status" value="1"/>
</dbReference>
<dbReference type="PANTHER" id="PTHR10188:SF6">
    <property type="entry name" value="N(4)-(BETA-N-ACETYLGLUCOSAMINYL)-L-ASPARAGINASE"/>
    <property type="match status" value="1"/>
</dbReference>
<dbReference type="Pfam" id="PF01112">
    <property type="entry name" value="Asparaginase_2"/>
    <property type="match status" value="1"/>
</dbReference>
<dbReference type="SUPFAM" id="SSF56235">
    <property type="entry name" value="N-terminal nucleophile aminohydrolases (Ntn hydrolases)"/>
    <property type="match status" value="1"/>
</dbReference>
<comment type="function">
    <text evidence="2">Cleaves the GlcNAc-Asn bond which joins oligosaccharides to the peptide of asparagine-linked glycoproteins.</text>
</comment>
<comment type="catalytic activity">
    <reaction evidence="2">
        <text>N(4)-(beta-N-acetyl-D-glucosaminyl)-L-asparagine + H2O = N-acetyl-beta-D-glucosaminylamine + L-aspartate + H(+)</text>
        <dbReference type="Rhea" id="RHEA:11544"/>
        <dbReference type="ChEBI" id="CHEBI:15377"/>
        <dbReference type="ChEBI" id="CHEBI:15378"/>
        <dbReference type="ChEBI" id="CHEBI:15947"/>
        <dbReference type="ChEBI" id="CHEBI:29991"/>
        <dbReference type="ChEBI" id="CHEBI:58080"/>
        <dbReference type="EC" id="3.5.1.26"/>
    </reaction>
</comment>
<comment type="subunit">
    <text evidence="2">Heterotetramer of two alpha and two beta chains arranged as a dimer of alpha/beta heterodimers.</text>
</comment>
<comment type="PTM">
    <text evidence="1">Cleaved into an alpha and beta chain by autocatalysis; this activates the enzyme. The N-terminal residue of the beta subunit is responsible for the nucleophile hydrolase activity (By similarity).</text>
</comment>
<comment type="similarity">
    <text evidence="3">Belongs to the Ntn-hydrolase family.</text>
</comment>
<proteinExistence type="inferred from homology"/>
<sequence length="393" mass="42213">MRTHLRASLWVLCLASTAFSILAAVNTSPKPTLASAFSGKAGTTAVKANKTTDELLPMVINTWNFTAANVLAWRILKQSKGGLRQTRNAVVEGCSKCEKLQCDRTVGYGGSPDELGETTLDAMVMDGATMDVGAVAGLRRIKDAIKVARHVLEHTQHTMLVGDAASAFANAMGFESESLVTPESKDMWLQWTAENCQPNFWKNVHPDPKVSCGPYKPRPTPLTRWKEDRARNEYEIGRKNHDTIGMIAIDVENNIHAGTSTNGANHKIPGRVGDSPIPGAGAYADNEVGAAVATGDGDVMMRFLPSLLAVEAMRAGKPPAEAAQKGLRRILKHQKDFMGALIAVDRLGNYGAACYGLAEFPFMVSSPAGADRPTRLETVKCIAGQDKVNIVAL</sequence>
<gene>
    <name type="ORF">GM21137</name>
</gene>
<organism>
    <name type="scientific">Drosophila sechellia</name>
    <name type="common">Fruit fly</name>
    <dbReference type="NCBI Taxonomy" id="7238"/>
    <lineage>
        <taxon>Eukaryota</taxon>
        <taxon>Metazoa</taxon>
        <taxon>Ecdysozoa</taxon>
        <taxon>Arthropoda</taxon>
        <taxon>Hexapoda</taxon>
        <taxon>Insecta</taxon>
        <taxon>Pterygota</taxon>
        <taxon>Neoptera</taxon>
        <taxon>Endopterygota</taxon>
        <taxon>Diptera</taxon>
        <taxon>Brachycera</taxon>
        <taxon>Muscomorpha</taxon>
        <taxon>Ephydroidea</taxon>
        <taxon>Drosophilidae</taxon>
        <taxon>Drosophila</taxon>
        <taxon>Sophophora</taxon>
    </lineage>
</organism>
<accession>B4HT15</accession>
<protein>
    <recommendedName>
        <fullName evidence="2">Putative N(4)-(beta-N-acetylglucosaminyl)-L-asparaginase GM21137</fullName>
        <ecNumber>3.5.1.26</ecNumber>
    </recommendedName>
    <alternativeName>
        <fullName evidence="2">Aspartylglucosaminidase</fullName>
        <shortName evidence="2">AGA</shortName>
    </alternativeName>
    <alternativeName>
        <fullName evidence="2">Glycosylasparaginase</fullName>
    </alternativeName>
    <alternativeName>
        <fullName evidence="2">N4-(N-acetyl-beta-glucosaminyl)-L-asparagine amidase</fullName>
    </alternativeName>
    <component>
        <recommendedName>
            <fullName evidence="2">Glycosylasparaginase alpha chain</fullName>
        </recommendedName>
    </component>
    <component>
        <recommendedName>
            <fullName evidence="2">Glycosylasparaginase beta chain</fullName>
        </recommendedName>
    </component>
</protein>
<keyword id="KW-0068">Autocatalytic cleavage</keyword>
<keyword id="KW-1015">Disulfide bond</keyword>
<keyword id="KW-0378">Hydrolase</keyword>
<keyword id="KW-0645">Protease</keyword>
<keyword id="KW-1185">Reference proteome</keyword>
<keyword id="KW-0732">Signal</keyword>
<evidence type="ECO:0000250" key="1"/>
<evidence type="ECO:0000250" key="2">
    <source>
        <dbReference type="UniProtKB" id="P20933"/>
    </source>
</evidence>
<evidence type="ECO:0000255" key="3"/>
<evidence type="ECO:0000312" key="4">
    <source>
        <dbReference type="EMBL" id="EDW47125.1"/>
    </source>
</evidence>